<proteinExistence type="inferred from homology"/>
<feature type="chain" id="PRO_1000131836" description="Probable Fe(2+)-trafficking protein">
    <location>
        <begin position="1"/>
        <end position="90"/>
    </location>
</feature>
<sequence>MTRRIFCQKLGKEADALNYSPYPGELGERIYNHISEQAWQAWLSHQTMLINEYRLSLIDPKARQFLEQEMINFLFGTGSEKPAGYTSEKE</sequence>
<name>FETP_COXB2</name>
<dbReference type="EMBL" id="CP001019">
    <property type="protein sequence ID" value="ACJ18405.1"/>
    <property type="molecule type" value="Genomic_DNA"/>
</dbReference>
<dbReference type="RefSeq" id="WP_012570063.1">
    <property type="nucleotide sequence ID" value="NC_011527.1"/>
</dbReference>
<dbReference type="SMR" id="B6J0C7"/>
<dbReference type="KEGG" id="cbg:CbuG_1063"/>
<dbReference type="HOGENOM" id="CLU_170994_0_0_6"/>
<dbReference type="GO" id="GO:0005829">
    <property type="term" value="C:cytosol"/>
    <property type="evidence" value="ECO:0007669"/>
    <property type="project" value="TreeGrafter"/>
</dbReference>
<dbReference type="GO" id="GO:0005506">
    <property type="term" value="F:iron ion binding"/>
    <property type="evidence" value="ECO:0007669"/>
    <property type="project" value="UniProtKB-UniRule"/>
</dbReference>
<dbReference type="GO" id="GO:0034599">
    <property type="term" value="P:cellular response to oxidative stress"/>
    <property type="evidence" value="ECO:0007669"/>
    <property type="project" value="TreeGrafter"/>
</dbReference>
<dbReference type="FunFam" id="1.10.3880.10:FF:000001">
    <property type="entry name" value="Probable Fe(2+)-trafficking protein"/>
    <property type="match status" value="1"/>
</dbReference>
<dbReference type="Gene3D" id="1.10.3880.10">
    <property type="entry name" value="Fe(II) trafficking protein YggX"/>
    <property type="match status" value="1"/>
</dbReference>
<dbReference type="HAMAP" id="MF_00686">
    <property type="entry name" value="Fe_traffic_YggX"/>
    <property type="match status" value="1"/>
</dbReference>
<dbReference type="InterPro" id="IPR007457">
    <property type="entry name" value="Fe_traffick_prot_YggX"/>
</dbReference>
<dbReference type="InterPro" id="IPR036766">
    <property type="entry name" value="Fe_traffick_prot_YggX_sf"/>
</dbReference>
<dbReference type="NCBIfam" id="NF003817">
    <property type="entry name" value="PRK05408.1"/>
    <property type="match status" value="1"/>
</dbReference>
<dbReference type="PANTHER" id="PTHR36965">
    <property type="entry name" value="FE(2+)-TRAFFICKING PROTEIN-RELATED"/>
    <property type="match status" value="1"/>
</dbReference>
<dbReference type="PANTHER" id="PTHR36965:SF1">
    <property type="entry name" value="FE(2+)-TRAFFICKING PROTEIN-RELATED"/>
    <property type="match status" value="1"/>
</dbReference>
<dbReference type="Pfam" id="PF04362">
    <property type="entry name" value="Iron_traffic"/>
    <property type="match status" value="1"/>
</dbReference>
<dbReference type="PIRSF" id="PIRSF029827">
    <property type="entry name" value="Fe_traffic_YggX"/>
    <property type="match status" value="1"/>
</dbReference>
<dbReference type="SUPFAM" id="SSF111148">
    <property type="entry name" value="YggX-like"/>
    <property type="match status" value="1"/>
</dbReference>
<accession>B6J0C7</accession>
<keyword id="KW-0408">Iron</keyword>
<gene>
    <name type="ordered locus">CbuG_1063</name>
</gene>
<comment type="function">
    <text evidence="1">Could be a mediator in iron transactions between iron acquisition and iron-requiring processes, such as synthesis and/or repair of Fe-S clusters in biosynthetic enzymes.</text>
</comment>
<comment type="similarity">
    <text evidence="1">Belongs to the Fe(2+)-trafficking protein family.</text>
</comment>
<reference key="1">
    <citation type="journal article" date="2009" name="Infect. Immun.">
        <title>Comparative genomics reveal extensive transposon-mediated genomic plasticity and diversity among potential effector proteins within the genus Coxiella.</title>
        <authorList>
            <person name="Beare P.A."/>
            <person name="Unsworth N."/>
            <person name="Andoh M."/>
            <person name="Voth D.E."/>
            <person name="Omsland A."/>
            <person name="Gilk S.D."/>
            <person name="Williams K.P."/>
            <person name="Sobral B.W."/>
            <person name="Kupko J.J. III"/>
            <person name="Porcella S.F."/>
            <person name="Samuel J.E."/>
            <person name="Heinzen R.A."/>
        </authorList>
    </citation>
    <scope>NUCLEOTIDE SEQUENCE [LARGE SCALE GENOMIC DNA]</scope>
    <source>
        <strain>CbuG_Q212</strain>
    </source>
</reference>
<protein>
    <recommendedName>
        <fullName evidence="1">Probable Fe(2+)-trafficking protein</fullName>
    </recommendedName>
</protein>
<evidence type="ECO:0000255" key="1">
    <source>
        <dbReference type="HAMAP-Rule" id="MF_00686"/>
    </source>
</evidence>
<organism>
    <name type="scientific">Coxiella burnetii (strain CbuG_Q212)</name>
    <name type="common">Coxiella burnetii (strain Q212)</name>
    <dbReference type="NCBI Taxonomy" id="434923"/>
    <lineage>
        <taxon>Bacteria</taxon>
        <taxon>Pseudomonadati</taxon>
        <taxon>Pseudomonadota</taxon>
        <taxon>Gammaproteobacteria</taxon>
        <taxon>Legionellales</taxon>
        <taxon>Coxiellaceae</taxon>
        <taxon>Coxiella</taxon>
    </lineage>
</organism>